<feature type="chain" id="PRO_1000193264" description="Ribosome-binding factor A">
    <location>
        <begin position="1"/>
        <end position="114"/>
    </location>
</feature>
<comment type="function">
    <text evidence="1">One of several proteins that assist in the late maturation steps of the functional core of the 30S ribosomal subunit. Associates with free 30S ribosomal subunits (but not with 30S subunits that are part of 70S ribosomes or polysomes). Required for efficient processing of 16S rRNA. May interact with the 5'-terminal helix region of 16S rRNA.</text>
</comment>
<comment type="subunit">
    <text evidence="1">Monomer. Binds 30S ribosomal subunits, but not 50S ribosomal subunits or 70S ribosomes.</text>
</comment>
<comment type="subcellular location">
    <subcellularLocation>
        <location evidence="1">Cytoplasm</location>
    </subcellularLocation>
</comment>
<comment type="similarity">
    <text evidence="1">Belongs to the RbfA family.</text>
</comment>
<evidence type="ECO:0000255" key="1">
    <source>
        <dbReference type="HAMAP-Rule" id="MF_00003"/>
    </source>
</evidence>
<dbReference type="EMBL" id="CP001175">
    <property type="protein sequence ID" value="ACK39590.1"/>
    <property type="molecule type" value="Genomic_DNA"/>
</dbReference>
<dbReference type="RefSeq" id="WP_003719600.1">
    <property type="nucleotide sequence ID" value="NC_011660.1"/>
</dbReference>
<dbReference type="SMR" id="B8DG00"/>
<dbReference type="GeneID" id="93239203"/>
<dbReference type="KEGG" id="lmh:LMHCC_1243"/>
<dbReference type="HOGENOM" id="CLU_089475_6_3_9"/>
<dbReference type="GO" id="GO:0005829">
    <property type="term" value="C:cytosol"/>
    <property type="evidence" value="ECO:0007669"/>
    <property type="project" value="TreeGrafter"/>
</dbReference>
<dbReference type="GO" id="GO:0043024">
    <property type="term" value="F:ribosomal small subunit binding"/>
    <property type="evidence" value="ECO:0007669"/>
    <property type="project" value="TreeGrafter"/>
</dbReference>
<dbReference type="GO" id="GO:0030490">
    <property type="term" value="P:maturation of SSU-rRNA"/>
    <property type="evidence" value="ECO:0007669"/>
    <property type="project" value="UniProtKB-UniRule"/>
</dbReference>
<dbReference type="FunFam" id="3.30.300.20:FF:000009">
    <property type="entry name" value="Ribosome-binding factor A"/>
    <property type="match status" value="1"/>
</dbReference>
<dbReference type="Gene3D" id="3.30.300.20">
    <property type="match status" value="1"/>
</dbReference>
<dbReference type="HAMAP" id="MF_00003">
    <property type="entry name" value="RbfA"/>
    <property type="match status" value="1"/>
</dbReference>
<dbReference type="InterPro" id="IPR015946">
    <property type="entry name" value="KH_dom-like_a/b"/>
</dbReference>
<dbReference type="InterPro" id="IPR000238">
    <property type="entry name" value="RbfA"/>
</dbReference>
<dbReference type="InterPro" id="IPR023799">
    <property type="entry name" value="RbfA_dom_sf"/>
</dbReference>
<dbReference type="InterPro" id="IPR020053">
    <property type="entry name" value="Ribosome-bd_factorA_CS"/>
</dbReference>
<dbReference type="NCBIfam" id="TIGR00082">
    <property type="entry name" value="rbfA"/>
    <property type="match status" value="1"/>
</dbReference>
<dbReference type="PANTHER" id="PTHR33515">
    <property type="entry name" value="RIBOSOME-BINDING FACTOR A, CHLOROPLASTIC-RELATED"/>
    <property type="match status" value="1"/>
</dbReference>
<dbReference type="PANTHER" id="PTHR33515:SF1">
    <property type="entry name" value="RIBOSOME-BINDING FACTOR A, CHLOROPLASTIC-RELATED"/>
    <property type="match status" value="1"/>
</dbReference>
<dbReference type="Pfam" id="PF02033">
    <property type="entry name" value="RBFA"/>
    <property type="match status" value="1"/>
</dbReference>
<dbReference type="SUPFAM" id="SSF89919">
    <property type="entry name" value="Ribosome-binding factor A, RbfA"/>
    <property type="match status" value="1"/>
</dbReference>
<dbReference type="PROSITE" id="PS01319">
    <property type="entry name" value="RBFA"/>
    <property type="match status" value="1"/>
</dbReference>
<protein>
    <recommendedName>
        <fullName evidence="1">Ribosome-binding factor A</fullName>
    </recommendedName>
</protein>
<name>RBFA_LISMH</name>
<reference key="1">
    <citation type="journal article" date="2011" name="J. Bacteriol.">
        <title>Genome sequence of lineage III Listeria monocytogenes strain HCC23.</title>
        <authorList>
            <person name="Steele C.L."/>
            <person name="Donaldson J.R."/>
            <person name="Paul D."/>
            <person name="Banes M.M."/>
            <person name="Arick T."/>
            <person name="Bridges S.M."/>
            <person name="Lawrence M.L."/>
        </authorList>
    </citation>
    <scope>NUCLEOTIDE SEQUENCE [LARGE SCALE GENOMIC DNA]</scope>
    <source>
        <strain>HCC23</strain>
    </source>
</reference>
<accession>B8DG00</accession>
<organism>
    <name type="scientific">Listeria monocytogenes serotype 4a (strain HCC23)</name>
    <dbReference type="NCBI Taxonomy" id="552536"/>
    <lineage>
        <taxon>Bacteria</taxon>
        <taxon>Bacillati</taxon>
        <taxon>Bacillota</taxon>
        <taxon>Bacilli</taxon>
        <taxon>Bacillales</taxon>
        <taxon>Listeriaceae</taxon>
        <taxon>Listeria</taxon>
    </lineage>
</organism>
<proteinExistence type="inferred from homology"/>
<gene>
    <name evidence="1" type="primary">rbfA</name>
    <name type="ordered locus">LMHCC_1243</name>
</gene>
<keyword id="KW-0963">Cytoplasm</keyword>
<keyword id="KW-0690">Ribosome biogenesis</keyword>
<sequence>MNVRANRVSEQMKKELGDILNRKIKDPRLGFVTVTGVDVTGDLQEAKVFISILGTDKEKENTLLALAKAHGFIRSEIGRRIRLRKVPEMSFEIDNSIAYGNRIDELLRDLNNDQ</sequence>